<evidence type="ECO:0000255" key="1">
    <source>
        <dbReference type="HAMAP-Rule" id="MF_01322"/>
    </source>
</evidence>
<keyword id="KW-0240">DNA-directed RNA polymerase</keyword>
<keyword id="KW-0460">Magnesium</keyword>
<keyword id="KW-0479">Metal-binding</keyword>
<keyword id="KW-0548">Nucleotidyltransferase</keyword>
<keyword id="KW-0804">Transcription</keyword>
<keyword id="KW-0808">Transferase</keyword>
<keyword id="KW-0862">Zinc</keyword>
<feature type="chain" id="PRO_0000225581" description="DNA-directed RNA polymerase subunit beta'">
    <location>
        <begin position="1"/>
        <end position="1216"/>
    </location>
</feature>
<feature type="binding site" evidence="1">
    <location>
        <position position="60"/>
    </location>
    <ligand>
        <name>Zn(2+)</name>
        <dbReference type="ChEBI" id="CHEBI:29105"/>
        <label>1</label>
    </ligand>
</feature>
<feature type="binding site" evidence="1">
    <location>
        <position position="62"/>
    </location>
    <ligand>
        <name>Zn(2+)</name>
        <dbReference type="ChEBI" id="CHEBI:29105"/>
        <label>1</label>
    </ligand>
</feature>
<feature type="binding site" evidence="1">
    <location>
        <position position="75"/>
    </location>
    <ligand>
        <name>Zn(2+)</name>
        <dbReference type="ChEBI" id="CHEBI:29105"/>
        <label>1</label>
    </ligand>
</feature>
<feature type="binding site" evidence="1">
    <location>
        <position position="78"/>
    </location>
    <ligand>
        <name>Zn(2+)</name>
        <dbReference type="ChEBI" id="CHEBI:29105"/>
        <label>1</label>
    </ligand>
</feature>
<feature type="binding site" evidence="1">
    <location>
        <position position="450"/>
    </location>
    <ligand>
        <name>Mg(2+)</name>
        <dbReference type="ChEBI" id="CHEBI:18420"/>
    </ligand>
</feature>
<feature type="binding site" evidence="1">
    <location>
        <position position="452"/>
    </location>
    <ligand>
        <name>Mg(2+)</name>
        <dbReference type="ChEBI" id="CHEBI:18420"/>
    </ligand>
</feature>
<feature type="binding site" evidence="1">
    <location>
        <position position="454"/>
    </location>
    <ligand>
        <name>Mg(2+)</name>
        <dbReference type="ChEBI" id="CHEBI:18420"/>
    </ligand>
</feature>
<feature type="binding site" evidence="1">
    <location>
        <position position="819"/>
    </location>
    <ligand>
        <name>Zn(2+)</name>
        <dbReference type="ChEBI" id="CHEBI:29105"/>
        <label>2</label>
    </ligand>
</feature>
<feature type="binding site" evidence="1">
    <location>
        <position position="893"/>
    </location>
    <ligand>
        <name>Zn(2+)</name>
        <dbReference type="ChEBI" id="CHEBI:29105"/>
        <label>2</label>
    </ligand>
</feature>
<feature type="binding site" evidence="1">
    <location>
        <position position="900"/>
    </location>
    <ligand>
        <name>Zn(2+)</name>
        <dbReference type="ChEBI" id="CHEBI:29105"/>
        <label>2</label>
    </ligand>
</feature>
<feature type="binding site" evidence="1">
    <location>
        <position position="903"/>
    </location>
    <ligand>
        <name>Zn(2+)</name>
        <dbReference type="ChEBI" id="CHEBI:29105"/>
        <label>2</label>
    </ligand>
</feature>
<organism>
    <name type="scientific">Streptococcus agalactiae serotype Ia (strain ATCC 27591 / A909 / CDC SS700)</name>
    <dbReference type="NCBI Taxonomy" id="205921"/>
    <lineage>
        <taxon>Bacteria</taxon>
        <taxon>Bacillati</taxon>
        <taxon>Bacillota</taxon>
        <taxon>Bacilli</taxon>
        <taxon>Lactobacillales</taxon>
        <taxon>Streptococcaceae</taxon>
        <taxon>Streptococcus</taxon>
    </lineage>
</organism>
<proteinExistence type="inferred from homology"/>
<protein>
    <recommendedName>
        <fullName evidence="1">DNA-directed RNA polymerase subunit beta'</fullName>
        <shortName evidence="1">RNAP subunit beta'</shortName>
        <ecNumber evidence="1">2.7.7.6</ecNumber>
    </recommendedName>
    <alternativeName>
        <fullName evidence="1">RNA polymerase subunit beta'</fullName>
    </alternativeName>
    <alternativeName>
        <fullName evidence="1">Transcriptase subunit beta'</fullName>
    </alternativeName>
</protein>
<gene>
    <name evidence="1" type="primary">rpoC</name>
    <name type="ordered locus">SAK_0224</name>
</gene>
<dbReference type="EC" id="2.7.7.6" evidence="1"/>
<dbReference type="EMBL" id="CP000114">
    <property type="protein sequence ID" value="ABA44773.1"/>
    <property type="molecule type" value="Genomic_DNA"/>
</dbReference>
<dbReference type="RefSeq" id="WP_000228729.1">
    <property type="nucleotide sequence ID" value="NC_007432.1"/>
</dbReference>
<dbReference type="SMR" id="Q3K3L1"/>
<dbReference type="GeneID" id="66885142"/>
<dbReference type="KEGG" id="sak:SAK_0224"/>
<dbReference type="HOGENOM" id="CLU_000524_3_1_9"/>
<dbReference type="GO" id="GO:0000428">
    <property type="term" value="C:DNA-directed RNA polymerase complex"/>
    <property type="evidence" value="ECO:0007669"/>
    <property type="project" value="UniProtKB-KW"/>
</dbReference>
<dbReference type="GO" id="GO:0003677">
    <property type="term" value="F:DNA binding"/>
    <property type="evidence" value="ECO:0007669"/>
    <property type="project" value="UniProtKB-UniRule"/>
</dbReference>
<dbReference type="GO" id="GO:0003899">
    <property type="term" value="F:DNA-directed RNA polymerase activity"/>
    <property type="evidence" value="ECO:0007669"/>
    <property type="project" value="UniProtKB-UniRule"/>
</dbReference>
<dbReference type="GO" id="GO:0000287">
    <property type="term" value="F:magnesium ion binding"/>
    <property type="evidence" value="ECO:0007669"/>
    <property type="project" value="UniProtKB-UniRule"/>
</dbReference>
<dbReference type="GO" id="GO:0008270">
    <property type="term" value="F:zinc ion binding"/>
    <property type="evidence" value="ECO:0007669"/>
    <property type="project" value="UniProtKB-UniRule"/>
</dbReference>
<dbReference type="GO" id="GO:0006351">
    <property type="term" value="P:DNA-templated transcription"/>
    <property type="evidence" value="ECO:0007669"/>
    <property type="project" value="UniProtKB-UniRule"/>
</dbReference>
<dbReference type="CDD" id="cd02655">
    <property type="entry name" value="RNAP_beta'_C"/>
    <property type="match status" value="1"/>
</dbReference>
<dbReference type="CDD" id="cd01609">
    <property type="entry name" value="RNAP_beta'_N"/>
    <property type="match status" value="1"/>
</dbReference>
<dbReference type="FunFam" id="1.10.150.390:FF:000002">
    <property type="entry name" value="DNA-directed RNA polymerase subunit beta"/>
    <property type="match status" value="1"/>
</dbReference>
<dbReference type="FunFam" id="4.10.860.120:FF:000001">
    <property type="entry name" value="DNA-directed RNA polymerase subunit beta"/>
    <property type="match status" value="1"/>
</dbReference>
<dbReference type="Gene3D" id="1.10.132.30">
    <property type="match status" value="1"/>
</dbReference>
<dbReference type="Gene3D" id="1.10.150.390">
    <property type="match status" value="1"/>
</dbReference>
<dbReference type="Gene3D" id="1.10.1790.20">
    <property type="match status" value="1"/>
</dbReference>
<dbReference type="Gene3D" id="1.10.40.90">
    <property type="match status" value="1"/>
</dbReference>
<dbReference type="Gene3D" id="2.40.40.20">
    <property type="match status" value="1"/>
</dbReference>
<dbReference type="Gene3D" id="2.40.50.100">
    <property type="match status" value="1"/>
</dbReference>
<dbReference type="Gene3D" id="4.10.860.120">
    <property type="entry name" value="RNA polymerase II, clamp domain"/>
    <property type="match status" value="1"/>
</dbReference>
<dbReference type="Gene3D" id="1.10.274.100">
    <property type="entry name" value="RNA polymerase Rpb1, domain 3"/>
    <property type="match status" value="1"/>
</dbReference>
<dbReference type="HAMAP" id="MF_01322">
    <property type="entry name" value="RNApol_bact_RpoC"/>
    <property type="match status" value="1"/>
</dbReference>
<dbReference type="InterPro" id="IPR045867">
    <property type="entry name" value="DNA-dir_RpoC_beta_prime"/>
</dbReference>
<dbReference type="InterPro" id="IPR012754">
    <property type="entry name" value="DNA-dir_RpoC_beta_prime_bact"/>
</dbReference>
<dbReference type="InterPro" id="IPR000722">
    <property type="entry name" value="RNA_pol_asu"/>
</dbReference>
<dbReference type="InterPro" id="IPR006592">
    <property type="entry name" value="RNA_pol_N"/>
</dbReference>
<dbReference type="InterPro" id="IPR007080">
    <property type="entry name" value="RNA_pol_Rpb1_1"/>
</dbReference>
<dbReference type="InterPro" id="IPR007066">
    <property type="entry name" value="RNA_pol_Rpb1_3"/>
</dbReference>
<dbReference type="InterPro" id="IPR042102">
    <property type="entry name" value="RNA_pol_Rpb1_3_sf"/>
</dbReference>
<dbReference type="InterPro" id="IPR007083">
    <property type="entry name" value="RNA_pol_Rpb1_4"/>
</dbReference>
<dbReference type="InterPro" id="IPR007081">
    <property type="entry name" value="RNA_pol_Rpb1_5"/>
</dbReference>
<dbReference type="InterPro" id="IPR044893">
    <property type="entry name" value="RNA_pol_Rpb1_clamp_domain"/>
</dbReference>
<dbReference type="InterPro" id="IPR038120">
    <property type="entry name" value="Rpb1_funnel_sf"/>
</dbReference>
<dbReference type="NCBIfam" id="TIGR02386">
    <property type="entry name" value="rpoC_TIGR"/>
    <property type="match status" value="1"/>
</dbReference>
<dbReference type="PANTHER" id="PTHR19376">
    <property type="entry name" value="DNA-DIRECTED RNA POLYMERASE"/>
    <property type="match status" value="1"/>
</dbReference>
<dbReference type="PANTHER" id="PTHR19376:SF54">
    <property type="entry name" value="DNA-DIRECTED RNA POLYMERASE SUBUNIT BETA"/>
    <property type="match status" value="1"/>
</dbReference>
<dbReference type="Pfam" id="PF04997">
    <property type="entry name" value="RNA_pol_Rpb1_1"/>
    <property type="match status" value="1"/>
</dbReference>
<dbReference type="Pfam" id="PF00623">
    <property type="entry name" value="RNA_pol_Rpb1_2"/>
    <property type="match status" value="1"/>
</dbReference>
<dbReference type="Pfam" id="PF04983">
    <property type="entry name" value="RNA_pol_Rpb1_3"/>
    <property type="match status" value="1"/>
</dbReference>
<dbReference type="Pfam" id="PF05000">
    <property type="entry name" value="RNA_pol_Rpb1_4"/>
    <property type="match status" value="1"/>
</dbReference>
<dbReference type="Pfam" id="PF04998">
    <property type="entry name" value="RNA_pol_Rpb1_5"/>
    <property type="match status" value="1"/>
</dbReference>
<dbReference type="SMART" id="SM00663">
    <property type="entry name" value="RPOLA_N"/>
    <property type="match status" value="1"/>
</dbReference>
<dbReference type="SUPFAM" id="SSF64484">
    <property type="entry name" value="beta and beta-prime subunits of DNA dependent RNA-polymerase"/>
    <property type="match status" value="1"/>
</dbReference>
<sequence>MVDVNRFKSMQITLASPSKVRSWSYGEVKKPETINYRTLKPEREGLFDEVIFGPTKDWECACGKYKRIRYKGIICDRCGVEVTRAKVRRERMGHIELKAPVSHIWYFKGIPSRMGLTLDMSPRALEEVIYFAAYVVIDPMDTPLEPKSLLTEREYREKLQEYGYGSFVAKMGAEAIQDLLKRVDLDAEIAVLKEELKSATGQKRVKAVRRLDVLDAFKKSGNKPEWMVLNILPVIPPDLRPMVQLDGGRFAASDLNDLYRRVINRNNRLARLLELNAPGIIVQNEKRMLQEAVDALIDNGRRGRPITGPGSRPLKSLSHMLKGKQGRFRQNLLGKRVDFSGRSVIAVGPTLKMYQCGVPREMAIELFKPFVMREIVARDLAGNVKAAKRMVERGDERIWDILEEVIKEHPVLLNRAPTLHRLGIQAFEPVLIDGKALRLHPLVCEAYNADFDGDQMAIHVPLSEEAQAEARLLMLAAEHILNPKDGKPVVTPSQDMVLGNYYLTMEDAGREGEGMIFKDHDEAVMAYQNGYVHLHTRVGIAVDSMPNKPWTEEQKHKIMVTTVGKILFNDIMPEDLPYLIEPNNANLTEKTPDKYFLEPGQDIQAVIDNLEINIPFKKKNLGNIIAETFKRFRTTETSAFLDRLKDLGYYHSTLAGLTVGIADIPVIDNKAEIIDAAHHRVEDINKAFRRGLMTEEDRYVAVTTTWREAKEALEKRLIETQDPKNPIVMMMDSGARGNISNFSQLAGMRGLMAAPNGRIMELPILSNFREGLSVLEMFFSTHGARKGMTDTALKTADSGYLTRRLVDVAQDVIIREDDCGTDRGLTITAITDGKEVTETLEERLIGRYTKKSIKHPETGEILVGADTLITEDMAAKVVKAGVEEVTIRSVFTCNTRHGVCRHCYGINLATGDAVEVGEAVGTIAAQSIGEPGTQLTMRTFHTGGVASNTDITQGLPRIQEIFEARNPKGEAVITEVKGEVVAIEEDSSTRTKKVFVKGQTGEGEYVVPFTARMKVEVGDEVARGAALTEGSIQPKRLLEVRDTLSVETYLLAEVQKVYRSQGVEIGDKHVEVMVRQMLRKVRVMDPGDTDLLPGTLMDISDFTDANKDIVISGGIPATSRPVLMGITKASLETNSFLSAASFQETTRVLTDAAIRGKKDHLLGLKENVIIGKIIPAGTGMARYRNIEPLAVNEVEIIEGTPVDAEVTEVSTPTTED</sequence>
<comment type="function">
    <text evidence="1">DNA-dependent RNA polymerase catalyzes the transcription of DNA into RNA using the four ribonucleoside triphosphates as substrates.</text>
</comment>
<comment type="catalytic activity">
    <reaction evidence="1">
        <text>RNA(n) + a ribonucleoside 5'-triphosphate = RNA(n+1) + diphosphate</text>
        <dbReference type="Rhea" id="RHEA:21248"/>
        <dbReference type="Rhea" id="RHEA-COMP:14527"/>
        <dbReference type="Rhea" id="RHEA-COMP:17342"/>
        <dbReference type="ChEBI" id="CHEBI:33019"/>
        <dbReference type="ChEBI" id="CHEBI:61557"/>
        <dbReference type="ChEBI" id="CHEBI:140395"/>
        <dbReference type="EC" id="2.7.7.6"/>
    </reaction>
</comment>
<comment type="cofactor">
    <cofactor evidence="1">
        <name>Mg(2+)</name>
        <dbReference type="ChEBI" id="CHEBI:18420"/>
    </cofactor>
    <text evidence="1">Binds 1 Mg(2+) ion per subunit.</text>
</comment>
<comment type="cofactor">
    <cofactor evidence="1">
        <name>Zn(2+)</name>
        <dbReference type="ChEBI" id="CHEBI:29105"/>
    </cofactor>
    <text evidence="1">Binds 2 Zn(2+) ions per subunit.</text>
</comment>
<comment type="subunit">
    <text evidence="1">The RNAP catalytic core consists of 2 alpha, 1 beta, 1 beta' and 1 omega subunit. When a sigma factor is associated with the core the holoenzyme is formed, which can initiate transcription.</text>
</comment>
<comment type="similarity">
    <text evidence="1">Belongs to the RNA polymerase beta' chain family.</text>
</comment>
<reference key="1">
    <citation type="journal article" date="2005" name="Proc. Natl. Acad. Sci. U.S.A.">
        <title>Genome analysis of multiple pathogenic isolates of Streptococcus agalactiae: implications for the microbial 'pan-genome'.</title>
        <authorList>
            <person name="Tettelin H."/>
            <person name="Masignani V."/>
            <person name="Cieslewicz M.J."/>
            <person name="Donati C."/>
            <person name="Medini D."/>
            <person name="Ward N.L."/>
            <person name="Angiuoli S.V."/>
            <person name="Crabtree J."/>
            <person name="Jones A.L."/>
            <person name="Durkin A.S."/>
            <person name="DeBoy R.T."/>
            <person name="Davidsen T.M."/>
            <person name="Mora M."/>
            <person name="Scarselli M."/>
            <person name="Margarit y Ros I."/>
            <person name="Peterson J.D."/>
            <person name="Hauser C.R."/>
            <person name="Sundaram J.P."/>
            <person name="Nelson W.C."/>
            <person name="Madupu R."/>
            <person name="Brinkac L.M."/>
            <person name="Dodson R.J."/>
            <person name="Rosovitz M.J."/>
            <person name="Sullivan S.A."/>
            <person name="Daugherty S.C."/>
            <person name="Haft D.H."/>
            <person name="Selengut J."/>
            <person name="Gwinn M.L."/>
            <person name="Zhou L."/>
            <person name="Zafar N."/>
            <person name="Khouri H."/>
            <person name="Radune D."/>
            <person name="Dimitrov G."/>
            <person name="Watkins K."/>
            <person name="O'Connor K.J."/>
            <person name="Smith S."/>
            <person name="Utterback T.R."/>
            <person name="White O."/>
            <person name="Rubens C.E."/>
            <person name="Grandi G."/>
            <person name="Madoff L.C."/>
            <person name="Kasper D.L."/>
            <person name="Telford J.L."/>
            <person name="Wessels M.R."/>
            <person name="Rappuoli R."/>
            <person name="Fraser C.M."/>
        </authorList>
    </citation>
    <scope>NUCLEOTIDE SEQUENCE [LARGE SCALE GENOMIC DNA]</scope>
    <source>
        <strain>ATCC 27591 / A909 / CDC SS700</strain>
    </source>
</reference>
<name>RPOC_STRA1</name>
<accession>Q3K3L1</accession>